<evidence type="ECO:0000255" key="1">
    <source>
        <dbReference type="HAMAP-Rule" id="MF_01416"/>
    </source>
</evidence>
<accession>Q89X71</accession>
<protein>
    <recommendedName>
        <fullName evidence="1">ATP synthase subunit delta</fullName>
    </recommendedName>
    <alternativeName>
        <fullName evidence="1">ATP synthase F(1) sector subunit delta</fullName>
    </alternativeName>
    <alternativeName>
        <fullName evidence="1">F-type ATPase subunit delta</fullName>
        <shortName evidence="1">F-ATPase subunit delta</shortName>
    </alternativeName>
</protein>
<keyword id="KW-0066">ATP synthesis</keyword>
<keyword id="KW-0997">Cell inner membrane</keyword>
<keyword id="KW-1003">Cell membrane</keyword>
<keyword id="KW-0139">CF(1)</keyword>
<keyword id="KW-0375">Hydrogen ion transport</keyword>
<keyword id="KW-0406">Ion transport</keyword>
<keyword id="KW-0472">Membrane</keyword>
<keyword id="KW-1185">Reference proteome</keyword>
<keyword id="KW-0813">Transport</keyword>
<sequence length="186" mass="19670">MAAEDTSVSGVSGRYATALFELARDQKAVDEVKADLDRFEALLGESADLKRLVRSPVFAADAQSRALTAVLDKVGIAGISANFLKVLTANRRLFVVADVIRAYRALVAKFKGEATADVTVAEALSDKNLDALKVALKSVTGKDVALNVKVDPSIIGGLVVKLGSRMVDGSLRTKLNSIKHAMKEAG</sequence>
<proteinExistence type="inferred from homology"/>
<dbReference type="EMBL" id="BA000040">
    <property type="protein sequence ID" value="BAC45708.1"/>
    <property type="molecule type" value="Genomic_DNA"/>
</dbReference>
<dbReference type="RefSeq" id="NP_767083.1">
    <property type="nucleotide sequence ID" value="NC_004463.1"/>
</dbReference>
<dbReference type="RefSeq" id="WP_011083275.1">
    <property type="nucleotide sequence ID" value="NC_004463.1"/>
</dbReference>
<dbReference type="SMR" id="Q89X71"/>
<dbReference type="FunCoup" id="Q89X71">
    <property type="interactions" value="453"/>
</dbReference>
<dbReference type="STRING" id="224911.AAV28_41465"/>
<dbReference type="EnsemblBacteria" id="BAC45708">
    <property type="protein sequence ID" value="BAC45708"/>
    <property type="gene ID" value="BAC45708"/>
</dbReference>
<dbReference type="GeneID" id="46495589"/>
<dbReference type="KEGG" id="bja:bll0443"/>
<dbReference type="PATRIC" id="fig|224911.44.peg.8973"/>
<dbReference type="eggNOG" id="COG0712">
    <property type="taxonomic scope" value="Bacteria"/>
</dbReference>
<dbReference type="HOGENOM" id="CLU_085114_0_1_5"/>
<dbReference type="InParanoid" id="Q89X71"/>
<dbReference type="OrthoDB" id="9796185at2"/>
<dbReference type="PhylomeDB" id="Q89X71"/>
<dbReference type="Proteomes" id="UP000002526">
    <property type="component" value="Chromosome"/>
</dbReference>
<dbReference type="GO" id="GO:0005886">
    <property type="term" value="C:plasma membrane"/>
    <property type="evidence" value="ECO:0007669"/>
    <property type="project" value="UniProtKB-SubCell"/>
</dbReference>
<dbReference type="GO" id="GO:0045259">
    <property type="term" value="C:proton-transporting ATP synthase complex"/>
    <property type="evidence" value="ECO:0007669"/>
    <property type="project" value="UniProtKB-KW"/>
</dbReference>
<dbReference type="GO" id="GO:0046933">
    <property type="term" value="F:proton-transporting ATP synthase activity, rotational mechanism"/>
    <property type="evidence" value="ECO:0007669"/>
    <property type="project" value="UniProtKB-UniRule"/>
</dbReference>
<dbReference type="GO" id="GO:0015986">
    <property type="term" value="P:proton motive force-driven ATP synthesis"/>
    <property type="evidence" value="ECO:0000318"/>
    <property type="project" value="GO_Central"/>
</dbReference>
<dbReference type="Gene3D" id="1.10.520.20">
    <property type="entry name" value="N-terminal domain of the delta subunit of the F1F0-ATP synthase"/>
    <property type="match status" value="1"/>
</dbReference>
<dbReference type="HAMAP" id="MF_01416">
    <property type="entry name" value="ATP_synth_delta_bact"/>
    <property type="match status" value="1"/>
</dbReference>
<dbReference type="InterPro" id="IPR026015">
    <property type="entry name" value="ATP_synth_OSCP/delta_N_sf"/>
</dbReference>
<dbReference type="InterPro" id="IPR020781">
    <property type="entry name" value="ATPase_OSCP/d_CS"/>
</dbReference>
<dbReference type="InterPro" id="IPR000711">
    <property type="entry name" value="ATPase_OSCP/dsu"/>
</dbReference>
<dbReference type="NCBIfam" id="TIGR01145">
    <property type="entry name" value="ATP_synt_delta"/>
    <property type="match status" value="1"/>
</dbReference>
<dbReference type="NCBIfam" id="NF004406">
    <property type="entry name" value="PRK05758.3-2"/>
    <property type="match status" value="1"/>
</dbReference>
<dbReference type="PANTHER" id="PTHR11910">
    <property type="entry name" value="ATP SYNTHASE DELTA CHAIN"/>
    <property type="match status" value="1"/>
</dbReference>
<dbReference type="Pfam" id="PF00213">
    <property type="entry name" value="OSCP"/>
    <property type="match status" value="1"/>
</dbReference>
<dbReference type="PRINTS" id="PR00125">
    <property type="entry name" value="ATPASEDELTA"/>
</dbReference>
<dbReference type="SUPFAM" id="SSF47928">
    <property type="entry name" value="N-terminal domain of the delta subunit of the F1F0-ATP synthase"/>
    <property type="match status" value="1"/>
</dbReference>
<dbReference type="PROSITE" id="PS00389">
    <property type="entry name" value="ATPASE_DELTA"/>
    <property type="match status" value="1"/>
</dbReference>
<reference key="1">
    <citation type="journal article" date="2002" name="DNA Res.">
        <title>Complete genomic sequence of nitrogen-fixing symbiotic bacterium Bradyrhizobium japonicum USDA110.</title>
        <authorList>
            <person name="Kaneko T."/>
            <person name="Nakamura Y."/>
            <person name="Sato S."/>
            <person name="Minamisawa K."/>
            <person name="Uchiumi T."/>
            <person name="Sasamoto S."/>
            <person name="Watanabe A."/>
            <person name="Idesawa K."/>
            <person name="Iriguchi M."/>
            <person name="Kawashima K."/>
            <person name="Kohara M."/>
            <person name="Matsumoto M."/>
            <person name="Shimpo S."/>
            <person name="Tsuruoka H."/>
            <person name="Wada T."/>
            <person name="Yamada M."/>
            <person name="Tabata S."/>
        </authorList>
    </citation>
    <scope>NUCLEOTIDE SEQUENCE [LARGE SCALE GENOMIC DNA]</scope>
    <source>
        <strain>JCM 10833 / BCRC 13528 / IAM 13628 / NBRC 14792 / USDA 110</strain>
    </source>
</reference>
<organism>
    <name type="scientific">Bradyrhizobium diazoefficiens (strain JCM 10833 / BCRC 13528 / IAM 13628 / NBRC 14792 / USDA 110)</name>
    <dbReference type="NCBI Taxonomy" id="224911"/>
    <lineage>
        <taxon>Bacteria</taxon>
        <taxon>Pseudomonadati</taxon>
        <taxon>Pseudomonadota</taxon>
        <taxon>Alphaproteobacteria</taxon>
        <taxon>Hyphomicrobiales</taxon>
        <taxon>Nitrobacteraceae</taxon>
        <taxon>Bradyrhizobium</taxon>
    </lineage>
</organism>
<name>ATPD_BRADU</name>
<gene>
    <name evidence="1" type="primary">atpH</name>
    <name type="ordered locus">bll0443</name>
</gene>
<comment type="function">
    <text evidence="1">F(1)F(0) ATP synthase produces ATP from ADP in the presence of a proton or sodium gradient. F-type ATPases consist of two structural domains, F(1) containing the extramembraneous catalytic core and F(0) containing the membrane proton channel, linked together by a central stalk and a peripheral stalk. During catalysis, ATP synthesis in the catalytic domain of F(1) is coupled via a rotary mechanism of the central stalk subunits to proton translocation.</text>
</comment>
<comment type="function">
    <text evidence="1">This protein is part of the stalk that links CF(0) to CF(1). It either transmits conformational changes from CF(0) to CF(1) or is implicated in proton conduction.</text>
</comment>
<comment type="subunit">
    <text evidence="1">F-type ATPases have 2 components, F(1) - the catalytic core - and F(0) - the membrane proton channel. F(1) has five subunits: alpha(3), beta(3), gamma(1), delta(1), epsilon(1). F(0) has three main subunits: a(1), b(2) and c(10-14). The alpha and beta chains form an alternating ring which encloses part of the gamma chain. F(1) is attached to F(0) by a central stalk formed by the gamma and epsilon chains, while a peripheral stalk is formed by the delta and b chains.</text>
</comment>
<comment type="subcellular location">
    <subcellularLocation>
        <location evidence="1">Cell inner membrane</location>
        <topology evidence="1">Peripheral membrane protein</topology>
    </subcellularLocation>
</comment>
<comment type="similarity">
    <text evidence="1">Belongs to the ATPase delta chain family.</text>
</comment>
<feature type="chain" id="PRO_0000370907" description="ATP synthase subunit delta">
    <location>
        <begin position="1"/>
        <end position="186"/>
    </location>
</feature>